<comment type="function">
    <text evidence="1">With S4 and S12 plays an important role in translational accuracy.</text>
</comment>
<comment type="subunit">
    <text evidence="1">Part of the 30S ribosomal subunit. Contacts protein S4.</text>
</comment>
<comment type="domain">
    <text>The N-terminal domain interacts with the head of the 30S subunit; the C-terminal domain interacts with the body and contacts protein S4. The interaction surface between S4 and S5 is involved in control of translational fidelity.</text>
</comment>
<comment type="similarity">
    <text evidence="1">Belongs to the universal ribosomal protein uS5 family.</text>
</comment>
<name>RS5_METHJ</name>
<keyword id="KW-1185">Reference proteome</keyword>
<keyword id="KW-0687">Ribonucleoprotein</keyword>
<keyword id="KW-0689">Ribosomal protein</keyword>
<keyword id="KW-0694">RNA-binding</keyword>
<keyword id="KW-0699">rRNA-binding</keyword>
<gene>
    <name evidence="1" type="primary">rps5</name>
    <name type="ordered locus">Mhun_2233</name>
</gene>
<reference key="1">
    <citation type="journal article" date="2016" name="Stand. Genomic Sci.">
        <title>Complete genome sequence of Methanospirillum hungatei type strain JF1.</title>
        <authorList>
            <person name="Gunsalus R.P."/>
            <person name="Cook L.E."/>
            <person name="Crable B."/>
            <person name="Rohlin L."/>
            <person name="McDonald E."/>
            <person name="Mouttaki H."/>
            <person name="Sieber J.R."/>
            <person name="Poweleit N."/>
            <person name="Zhou H."/>
            <person name="Lapidus A.L."/>
            <person name="Daligault H.E."/>
            <person name="Land M."/>
            <person name="Gilna P."/>
            <person name="Ivanova N."/>
            <person name="Kyrpides N."/>
            <person name="Culley D.E."/>
            <person name="McInerney M.J."/>
        </authorList>
    </citation>
    <scope>NUCLEOTIDE SEQUENCE [LARGE SCALE GENOMIC DNA]</scope>
    <source>
        <strain>ATCC 27890 / DSM 864 / NBRC 100397 / JF-1</strain>
    </source>
</reference>
<sequence>MAFDKSEWVPLTGLGRMVQAGEIKSIDEILSSGKPIKEPEIVDAFLPDLVDEVLDINMVQRMTDSGRRVKFRAVVVVGNRDGYIGFGQGKDAQVGDAIKKAIVSAKINLVKVRRGCGSWECGCSNPHSIPMLVTGDAGSVRVTLRPAPQGIGLVTGDIGKKVLELAGIRDVWAQTQGQTRTTINYAKATFNALKATNMIRLGGME</sequence>
<dbReference type="EMBL" id="CP000254">
    <property type="protein sequence ID" value="ABD41938.1"/>
    <property type="molecule type" value="Genomic_DNA"/>
</dbReference>
<dbReference type="RefSeq" id="WP_011449196.1">
    <property type="nucleotide sequence ID" value="NC_007796.1"/>
</dbReference>
<dbReference type="SMR" id="Q2FSG3"/>
<dbReference type="FunCoup" id="Q2FSG3">
    <property type="interactions" value="180"/>
</dbReference>
<dbReference type="STRING" id="323259.Mhun_2233"/>
<dbReference type="EnsemblBacteria" id="ABD41938">
    <property type="protein sequence ID" value="ABD41938"/>
    <property type="gene ID" value="Mhun_2233"/>
</dbReference>
<dbReference type="GeneID" id="3924101"/>
<dbReference type="KEGG" id="mhu:Mhun_2233"/>
<dbReference type="eggNOG" id="arCOG04087">
    <property type="taxonomic scope" value="Archaea"/>
</dbReference>
<dbReference type="HOGENOM" id="CLU_065898_0_1_2"/>
<dbReference type="InParanoid" id="Q2FSG3"/>
<dbReference type="OrthoDB" id="38155at2157"/>
<dbReference type="Proteomes" id="UP000001941">
    <property type="component" value="Chromosome"/>
</dbReference>
<dbReference type="GO" id="GO:0015935">
    <property type="term" value="C:small ribosomal subunit"/>
    <property type="evidence" value="ECO:0007669"/>
    <property type="project" value="InterPro"/>
</dbReference>
<dbReference type="GO" id="GO:0019843">
    <property type="term" value="F:rRNA binding"/>
    <property type="evidence" value="ECO:0007669"/>
    <property type="project" value="UniProtKB-UniRule"/>
</dbReference>
<dbReference type="GO" id="GO:0003735">
    <property type="term" value="F:structural constituent of ribosome"/>
    <property type="evidence" value="ECO:0007669"/>
    <property type="project" value="InterPro"/>
</dbReference>
<dbReference type="GO" id="GO:0006412">
    <property type="term" value="P:translation"/>
    <property type="evidence" value="ECO:0007669"/>
    <property type="project" value="UniProtKB-UniRule"/>
</dbReference>
<dbReference type="FunFam" id="3.30.160.20:FF:000002">
    <property type="entry name" value="40S ribosomal protein S2"/>
    <property type="match status" value="1"/>
</dbReference>
<dbReference type="FunFam" id="3.30.230.10:FF:000004">
    <property type="entry name" value="40S ribosomal protein S2"/>
    <property type="match status" value="1"/>
</dbReference>
<dbReference type="Gene3D" id="3.30.160.20">
    <property type="match status" value="1"/>
</dbReference>
<dbReference type="Gene3D" id="3.30.230.10">
    <property type="match status" value="1"/>
</dbReference>
<dbReference type="HAMAP" id="MF_01307_A">
    <property type="entry name" value="Ribosomal_uS5_A"/>
    <property type="match status" value="1"/>
</dbReference>
<dbReference type="InterPro" id="IPR020568">
    <property type="entry name" value="Ribosomal_Su5_D2-typ_SF"/>
</dbReference>
<dbReference type="InterPro" id="IPR000851">
    <property type="entry name" value="Ribosomal_uS5"/>
</dbReference>
<dbReference type="InterPro" id="IPR047866">
    <property type="entry name" value="Ribosomal_uS5_arc"/>
</dbReference>
<dbReference type="InterPro" id="IPR005324">
    <property type="entry name" value="Ribosomal_uS5_C"/>
</dbReference>
<dbReference type="InterPro" id="IPR005711">
    <property type="entry name" value="Ribosomal_uS5_euk/arc"/>
</dbReference>
<dbReference type="InterPro" id="IPR013810">
    <property type="entry name" value="Ribosomal_uS5_N"/>
</dbReference>
<dbReference type="InterPro" id="IPR018192">
    <property type="entry name" value="Ribosomal_uS5_N_CS"/>
</dbReference>
<dbReference type="InterPro" id="IPR014721">
    <property type="entry name" value="Ribsml_uS5_D2-typ_fold_subgr"/>
</dbReference>
<dbReference type="NCBIfam" id="NF003125">
    <property type="entry name" value="PRK04044.1"/>
    <property type="match status" value="1"/>
</dbReference>
<dbReference type="NCBIfam" id="TIGR01020">
    <property type="entry name" value="uS5_euk_arch"/>
    <property type="match status" value="1"/>
</dbReference>
<dbReference type="PANTHER" id="PTHR48277">
    <property type="entry name" value="MITOCHONDRIAL RIBOSOMAL PROTEIN S5"/>
    <property type="match status" value="1"/>
</dbReference>
<dbReference type="PANTHER" id="PTHR48277:SF1">
    <property type="entry name" value="MITOCHONDRIAL RIBOSOMAL PROTEIN S5"/>
    <property type="match status" value="1"/>
</dbReference>
<dbReference type="Pfam" id="PF00333">
    <property type="entry name" value="Ribosomal_S5"/>
    <property type="match status" value="1"/>
</dbReference>
<dbReference type="Pfam" id="PF03719">
    <property type="entry name" value="Ribosomal_S5_C"/>
    <property type="match status" value="1"/>
</dbReference>
<dbReference type="SUPFAM" id="SSF54768">
    <property type="entry name" value="dsRNA-binding domain-like"/>
    <property type="match status" value="1"/>
</dbReference>
<dbReference type="SUPFAM" id="SSF54211">
    <property type="entry name" value="Ribosomal protein S5 domain 2-like"/>
    <property type="match status" value="1"/>
</dbReference>
<dbReference type="PROSITE" id="PS00585">
    <property type="entry name" value="RIBOSOMAL_S5"/>
    <property type="match status" value="1"/>
</dbReference>
<dbReference type="PROSITE" id="PS50881">
    <property type="entry name" value="S5_DSRBD"/>
    <property type="match status" value="1"/>
</dbReference>
<organism>
    <name type="scientific">Methanospirillum hungatei JF-1 (strain ATCC 27890 / DSM 864 / NBRC 100397 / JF-1)</name>
    <dbReference type="NCBI Taxonomy" id="323259"/>
    <lineage>
        <taxon>Archaea</taxon>
        <taxon>Methanobacteriati</taxon>
        <taxon>Methanobacteriota</taxon>
        <taxon>Stenosarchaea group</taxon>
        <taxon>Methanomicrobia</taxon>
        <taxon>Methanomicrobiales</taxon>
        <taxon>Methanospirillaceae</taxon>
        <taxon>Methanospirillum</taxon>
    </lineage>
</organism>
<evidence type="ECO:0000255" key="1">
    <source>
        <dbReference type="HAMAP-Rule" id="MF_01307"/>
    </source>
</evidence>
<evidence type="ECO:0000305" key="2"/>
<feature type="chain" id="PRO_0000293213" description="Small ribosomal subunit protein uS5">
    <location>
        <begin position="1"/>
        <end position="205"/>
    </location>
</feature>
<feature type="domain" description="S5 DRBM" evidence="1">
    <location>
        <begin position="49"/>
        <end position="112"/>
    </location>
</feature>
<protein>
    <recommendedName>
        <fullName evidence="1">Small ribosomal subunit protein uS5</fullName>
    </recommendedName>
    <alternativeName>
        <fullName evidence="2">30S ribosomal protein S5</fullName>
    </alternativeName>
</protein>
<proteinExistence type="inferred from homology"/>
<accession>Q2FSG3</accession>